<keyword id="KW-0903">Direct protein sequencing</keyword>
<keyword id="KW-1015">Disulfide bond</keyword>
<keyword id="KW-1199">Hemostasis impairing toxin</keyword>
<keyword id="KW-1202">Platelet aggregation activating toxin</keyword>
<keyword id="KW-0964">Secreted</keyword>
<keyword id="KW-0732">Signal</keyword>
<keyword id="KW-0800">Toxin</keyword>
<feature type="signal peptide">
    <location>
        <begin position="1"/>
        <end position="23"/>
    </location>
</feature>
<feature type="chain" id="PRO_5000064016" description="Snaclec agglucetin subunit alpha-2">
    <location>
        <begin position="24"/>
        <end position="158"/>
    </location>
</feature>
<feature type="domain" description="C-type lectin" evidence="2">
    <location>
        <begin position="34"/>
        <end position="153"/>
    </location>
</feature>
<feature type="disulfide bond" evidence="2">
    <location>
        <begin position="27"/>
        <end position="38"/>
    </location>
</feature>
<feature type="disulfide bond" evidence="2">
    <location>
        <begin position="55"/>
        <end position="152"/>
    </location>
</feature>
<feature type="disulfide bond" description="Interchain" evidence="2">
    <location>
        <position position="104"/>
    </location>
</feature>
<feature type="disulfide bond" evidence="2">
    <location>
        <begin position="127"/>
        <end position="144"/>
    </location>
</feature>
<feature type="sequence conflict" description="In Ref. 2; AAL66391." evidence="5" ref="2">
    <original>N</original>
    <variation>S</variation>
    <location>
        <position position="83"/>
    </location>
</feature>
<sequence>MGRFIFVSFGLLVVFLSLSGTGADFNCPPGWSAYDQYCYQVIKEPKNWDDAERFCTEQADGGHLVSIESKGERDFVAQLVSQNIESVEDHVWTGLRVQNKEKQCSTEWSDGSSVSYENLLELYMRKCGALERETGFHKWINLGCIQLNPFVCKFPPQC</sequence>
<accession>Q8AYA5</accession>
<accession>Q8UVC6</accession>
<proteinExistence type="evidence at protein level"/>
<reference key="1">
    <citation type="submission" date="2001-12" db="EMBL/GenBank/DDBJ databases">
        <authorList>
            <person name="Yu H."/>
            <person name="Xiang K."/>
            <person name="Liu J."/>
        </authorList>
    </citation>
    <scope>NUCLEOTIDE SEQUENCE [MRNA]</scope>
    <source>
        <tissue>Venom gland</tissue>
    </source>
</reference>
<reference key="2">
    <citation type="journal article" date="2003" name="Thromb. Haemost.">
        <title>A tetrameric glycoprotein Ib-binding protein, agglucetin, from Formosan pit viper: structure and interaction with human platelets.</title>
        <authorList>
            <person name="Wang W.J."/>
            <person name="Ling Q.D."/>
            <person name="Liau M.Y."/>
            <person name="Huang T.F."/>
        </authorList>
    </citation>
    <scope>NUCLEOTIDE SEQUENCE [MRNA]</scope>
    <source>
        <tissue>Venom gland</tissue>
    </source>
</reference>
<reference key="3">
    <citation type="journal article" date="2001" name="Thromb. Haemost.">
        <title>A novel tetrameric venom protein, agglucetin from Agkistrodon acutus, acts as a glycoprotein Ib agonist.</title>
        <authorList>
            <person name="Wang W.J."/>
            <person name="Huang T.F."/>
        </authorList>
    </citation>
    <scope>PARTIAL PROTEIN SEQUENCE</scope>
    <scope>FUNCTION</scope>
    <scope>SUBUNIT</scope>
    <source>
        <tissue>Venom</tissue>
    </source>
</reference>
<reference key="4">
    <citation type="journal article" date="2008" name="Biochem. Biophys. Res. Commun.">
        <title>Agglucetin, a tetrameric C-type lectin-like venom protein, regulates endothelial cell survival and promotes angiogenesis by activating integrin alphavbeta3 signaling.</title>
        <authorList>
            <person name="Wang W.J."/>
        </authorList>
    </citation>
    <scope>FUNCTION</scope>
</reference>
<name>SLA2_DEIAC</name>
<protein>
    <recommendedName>
        <fullName>Snaclec agglucetin subunit alpha-2</fullName>
    </recommendedName>
    <alternativeName>
        <fullName>Antithrombin 1 chain A</fullName>
    </alternativeName>
</protein>
<comment type="function">
    <text evidence="3 4">Agglucetin specifically causes platelet aggregation and surface exposure of integrin alpha-IIb/beta-3 with a GPIb-(GP1BA-) dependent manner in washed platelets. It binds to human platelets in a saturable manner, and its binding is specifically blocked by anti-GP Ib mAb. It regulates endothelial cell survival and promotes angiogenesis by activating integrin alpha-v/beta-3 signaling through FAK/phosphatidylinositol 3-kinase (PI3K)/Akt pathway.</text>
</comment>
<comment type="subunit">
    <text evidence="3">Heterotetramer of the subunits alpha-1, alpha-2, beta-1 and beta-2; disulfide-linked.</text>
</comment>
<comment type="subcellular location">
    <subcellularLocation>
        <location evidence="1">Secreted</location>
    </subcellularLocation>
</comment>
<comment type="tissue specificity">
    <text>Expressed by the venom gland.</text>
</comment>
<comment type="similarity">
    <text evidence="5">Belongs to the snaclec family.</text>
</comment>
<evidence type="ECO:0000250" key="1"/>
<evidence type="ECO:0000255" key="2">
    <source>
        <dbReference type="PROSITE-ProRule" id="PRU00040"/>
    </source>
</evidence>
<evidence type="ECO:0000269" key="3">
    <source>
    </source>
</evidence>
<evidence type="ECO:0000269" key="4">
    <source>
    </source>
</evidence>
<evidence type="ECO:0000305" key="5"/>
<dbReference type="EMBL" id="AF463522">
    <property type="protein sequence ID" value="AAL66391.1"/>
    <property type="molecule type" value="mRNA"/>
</dbReference>
<dbReference type="EMBL" id="AF540646">
    <property type="protein sequence ID" value="AAN23125.1"/>
    <property type="molecule type" value="mRNA"/>
</dbReference>
<dbReference type="SMR" id="Q8AYA5"/>
<dbReference type="GO" id="GO:0005576">
    <property type="term" value="C:extracellular region"/>
    <property type="evidence" value="ECO:0007669"/>
    <property type="project" value="UniProtKB-SubCell"/>
</dbReference>
<dbReference type="GO" id="GO:0090729">
    <property type="term" value="F:toxin activity"/>
    <property type="evidence" value="ECO:0007669"/>
    <property type="project" value="UniProtKB-KW"/>
</dbReference>
<dbReference type="FunFam" id="3.10.100.10:FF:000087">
    <property type="entry name" value="Snaclec rhodocetin subunit delta"/>
    <property type="match status" value="1"/>
</dbReference>
<dbReference type="Gene3D" id="3.10.100.10">
    <property type="entry name" value="Mannose-Binding Protein A, subunit A"/>
    <property type="match status" value="1"/>
</dbReference>
<dbReference type="InterPro" id="IPR001304">
    <property type="entry name" value="C-type_lectin-like"/>
</dbReference>
<dbReference type="InterPro" id="IPR016186">
    <property type="entry name" value="C-type_lectin-like/link_sf"/>
</dbReference>
<dbReference type="InterPro" id="IPR050111">
    <property type="entry name" value="C-type_lectin/snaclec_domain"/>
</dbReference>
<dbReference type="InterPro" id="IPR018378">
    <property type="entry name" value="C-type_lectin_CS"/>
</dbReference>
<dbReference type="InterPro" id="IPR016187">
    <property type="entry name" value="CTDL_fold"/>
</dbReference>
<dbReference type="PANTHER" id="PTHR22803">
    <property type="entry name" value="MANNOSE, PHOSPHOLIPASE, LECTIN RECEPTOR RELATED"/>
    <property type="match status" value="1"/>
</dbReference>
<dbReference type="Pfam" id="PF00059">
    <property type="entry name" value="Lectin_C"/>
    <property type="match status" value="1"/>
</dbReference>
<dbReference type="PRINTS" id="PR01504">
    <property type="entry name" value="PNCREATITSAP"/>
</dbReference>
<dbReference type="SMART" id="SM00034">
    <property type="entry name" value="CLECT"/>
    <property type="match status" value="1"/>
</dbReference>
<dbReference type="SUPFAM" id="SSF56436">
    <property type="entry name" value="C-type lectin-like"/>
    <property type="match status" value="1"/>
</dbReference>
<dbReference type="PROSITE" id="PS00615">
    <property type="entry name" value="C_TYPE_LECTIN_1"/>
    <property type="match status" value="1"/>
</dbReference>
<dbReference type="PROSITE" id="PS50041">
    <property type="entry name" value="C_TYPE_LECTIN_2"/>
    <property type="match status" value="1"/>
</dbReference>
<organism>
    <name type="scientific">Deinagkistrodon acutus</name>
    <name type="common">Hundred-pace snake</name>
    <name type="synonym">Agkistrodon acutus</name>
    <dbReference type="NCBI Taxonomy" id="36307"/>
    <lineage>
        <taxon>Eukaryota</taxon>
        <taxon>Metazoa</taxon>
        <taxon>Chordata</taxon>
        <taxon>Craniata</taxon>
        <taxon>Vertebrata</taxon>
        <taxon>Euteleostomi</taxon>
        <taxon>Lepidosauria</taxon>
        <taxon>Squamata</taxon>
        <taxon>Bifurcata</taxon>
        <taxon>Unidentata</taxon>
        <taxon>Episquamata</taxon>
        <taxon>Toxicofera</taxon>
        <taxon>Serpentes</taxon>
        <taxon>Colubroidea</taxon>
        <taxon>Viperidae</taxon>
        <taxon>Crotalinae</taxon>
        <taxon>Deinagkistrodon</taxon>
    </lineage>
</organism>